<proteinExistence type="inferred from homology"/>
<feature type="chain" id="PRO_1000008954" description="Sulfate adenylyltransferase subunit 2">
    <location>
        <begin position="1"/>
        <end position="302"/>
    </location>
</feature>
<protein>
    <recommendedName>
        <fullName evidence="1">Sulfate adenylyltransferase subunit 2</fullName>
        <ecNumber evidence="1">2.7.7.4</ecNumber>
    </recommendedName>
    <alternativeName>
        <fullName evidence="1">ATP-sulfurylase small subunit</fullName>
    </alternativeName>
    <alternativeName>
        <fullName evidence="1">Sulfate adenylate transferase</fullName>
        <shortName evidence="1">SAT</shortName>
    </alternativeName>
</protein>
<reference key="1">
    <citation type="submission" date="2007-08" db="EMBL/GenBank/DDBJ databases">
        <authorList>
            <consortium name="The Citrobacter koseri Genome Sequencing Project"/>
            <person name="McClelland M."/>
            <person name="Sanderson E.K."/>
            <person name="Porwollik S."/>
            <person name="Spieth J."/>
            <person name="Clifton W.S."/>
            <person name="Latreille P."/>
            <person name="Courtney L."/>
            <person name="Wang C."/>
            <person name="Pepin K."/>
            <person name="Bhonagiri V."/>
            <person name="Nash W."/>
            <person name="Johnson M."/>
            <person name="Thiruvilangam P."/>
            <person name="Wilson R."/>
        </authorList>
    </citation>
    <scope>NUCLEOTIDE SEQUENCE [LARGE SCALE GENOMIC DNA]</scope>
    <source>
        <strain>ATCC BAA-895 / CDC 4225-83 / SGSC4696</strain>
    </source>
</reference>
<organism>
    <name type="scientific">Citrobacter koseri (strain ATCC BAA-895 / CDC 4225-83 / SGSC4696)</name>
    <dbReference type="NCBI Taxonomy" id="290338"/>
    <lineage>
        <taxon>Bacteria</taxon>
        <taxon>Pseudomonadati</taxon>
        <taxon>Pseudomonadota</taxon>
        <taxon>Gammaproteobacteria</taxon>
        <taxon>Enterobacterales</taxon>
        <taxon>Enterobacteriaceae</taxon>
        <taxon>Citrobacter</taxon>
    </lineage>
</organism>
<keyword id="KW-0067">ATP-binding</keyword>
<keyword id="KW-0547">Nucleotide-binding</keyword>
<keyword id="KW-0548">Nucleotidyltransferase</keyword>
<keyword id="KW-1185">Reference proteome</keyword>
<keyword id="KW-0808">Transferase</keyword>
<name>CYSD_CITK8</name>
<accession>A8ANW6</accession>
<sequence>MDQKRLTHLRQLEAESIHIIREVAAEFSNPVMMYSIGKDSSVMLHLARKAFYPGTLPFPLLHVDTGWKFREMYEFRDRTAKAYGCELLVHKNPEGVAMGINPFVHGSAKHTDIMKTEGLKQALDKYGFDAAFGGARRDEEKSRAKERIYSFRDRFHRWDPKNQRPELWHNYNGQINKGESIRVFPLSNWTEQDIWQYIWLENIEIVPLYLAAERPVLERDGMLMMIDDDRIDLQPGEVIKKRMVRFRTLGCWPLTGAVESSAQTLPEIIEEMLVSTTSERQGRVIDRDQAGSMELKKRQGYF</sequence>
<gene>
    <name evidence="1" type="primary">cysD</name>
    <name type="ordered locus">CKO_04113</name>
</gene>
<comment type="function">
    <text evidence="1">With CysN forms the ATP sulfurylase (ATPS) that catalyzes the adenylation of sulfate producing adenosine 5'-phosphosulfate (APS) and diphosphate, the first enzymatic step in sulfur assimilation pathway. APS synthesis involves the formation of a high-energy phosphoric-sulfuric acid anhydride bond driven by GTP hydrolysis by CysN coupled to ATP hydrolysis by CysD.</text>
</comment>
<comment type="catalytic activity">
    <reaction evidence="1">
        <text>sulfate + ATP + H(+) = adenosine 5'-phosphosulfate + diphosphate</text>
        <dbReference type="Rhea" id="RHEA:18133"/>
        <dbReference type="ChEBI" id="CHEBI:15378"/>
        <dbReference type="ChEBI" id="CHEBI:16189"/>
        <dbReference type="ChEBI" id="CHEBI:30616"/>
        <dbReference type="ChEBI" id="CHEBI:33019"/>
        <dbReference type="ChEBI" id="CHEBI:58243"/>
        <dbReference type="EC" id="2.7.7.4"/>
    </reaction>
</comment>
<comment type="pathway">
    <text evidence="1">Sulfur metabolism; hydrogen sulfide biosynthesis; sulfite from sulfate: step 1/3.</text>
</comment>
<comment type="subunit">
    <text evidence="1">Heterodimer composed of CysD, the smaller subunit, and CysN.</text>
</comment>
<comment type="similarity">
    <text evidence="1">Belongs to the PAPS reductase family. CysD subfamily.</text>
</comment>
<evidence type="ECO:0000255" key="1">
    <source>
        <dbReference type="HAMAP-Rule" id="MF_00064"/>
    </source>
</evidence>
<dbReference type="EC" id="2.7.7.4" evidence="1"/>
<dbReference type="EMBL" id="CP000822">
    <property type="protein sequence ID" value="ABV15179.1"/>
    <property type="molecule type" value="Genomic_DNA"/>
</dbReference>
<dbReference type="RefSeq" id="WP_012134868.1">
    <property type="nucleotide sequence ID" value="NC_009792.1"/>
</dbReference>
<dbReference type="SMR" id="A8ANW6"/>
<dbReference type="STRING" id="290338.CKO_04113"/>
<dbReference type="GeneID" id="45137750"/>
<dbReference type="KEGG" id="cko:CKO_04113"/>
<dbReference type="HOGENOM" id="CLU_043026_0_0_6"/>
<dbReference type="OrthoDB" id="9772604at2"/>
<dbReference type="UniPathway" id="UPA00140">
    <property type="reaction ID" value="UER00204"/>
</dbReference>
<dbReference type="Proteomes" id="UP000008148">
    <property type="component" value="Chromosome"/>
</dbReference>
<dbReference type="GO" id="GO:0005524">
    <property type="term" value="F:ATP binding"/>
    <property type="evidence" value="ECO:0007669"/>
    <property type="project" value="UniProtKB-KW"/>
</dbReference>
<dbReference type="GO" id="GO:0004781">
    <property type="term" value="F:sulfate adenylyltransferase (ATP) activity"/>
    <property type="evidence" value="ECO:0007669"/>
    <property type="project" value="UniProtKB-UniRule"/>
</dbReference>
<dbReference type="GO" id="GO:0070814">
    <property type="term" value="P:hydrogen sulfide biosynthetic process"/>
    <property type="evidence" value="ECO:0007669"/>
    <property type="project" value="UniProtKB-UniRule"/>
</dbReference>
<dbReference type="GO" id="GO:0000103">
    <property type="term" value="P:sulfate assimilation"/>
    <property type="evidence" value="ECO:0007669"/>
    <property type="project" value="UniProtKB-UniRule"/>
</dbReference>
<dbReference type="CDD" id="cd23946">
    <property type="entry name" value="Sulfate_adenylyltransferase_2"/>
    <property type="match status" value="1"/>
</dbReference>
<dbReference type="FunFam" id="3.40.50.620:FF:000002">
    <property type="entry name" value="Sulfate adenylyltransferase subunit 2"/>
    <property type="match status" value="1"/>
</dbReference>
<dbReference type="Gene3D" id="3.40.50.620">
    <property type="entry name" value="HUPs"/>
    <property type="match status" value="1"/>
</dbReference>
<dbReference type="HAMAP" id="MF_00064">
    <property type="entry name" value="Sulf_adenylyltr_sub2"/>
    <property type="match status" value="1"/>
</dbReference>
<dbReference type="InterPro" id="IPR002500">
    <property type="entry name" value="PAPS_reduct_dom"/>
</dbReference>
<dbReference type="InterPro" id="IPR014729">
    <property type="entry name" value="Rossmann-like_a/b/a_fold"/>
</dbReference>
<dbReference type="InterPro" id="IPR011784">
    <property type="entry name" value="SO4_adenylTrfase_ssu"/>
</dbReference>
<dbReference type="InterPro" id="IPR050128">
    <property type="entry name" value="Sulfate_adenylyltrnsfr_sub2"/>
</dbReference>
<dbReference type="NCBIfam" id="TIGR02039">
    <property type="entry name" value="CysD"/>
    <property type="match status" value="1"/>
</dbReference>
<dbReference type="NCBIfam" id="NF003587">
    <property type="entry name" value="PRK05253.1"/>
    <property type="match status" value="1"/>
</dbReference>
<dbReference type="NCBIfam" id="NF009214">
    <property type="entry name" value="PRK12563.1"/>
    <property type="match status" value="1"/>
</dbReference>
<dbReference type="PANTHER" id="PTHR43196">
    <property type="entry name" value="SULFATE ADENYLYLTRANSFERASE SUBUNIT 2"/>
    <property type="match status" value="1"/>
</dbReference>
<dbReference type="PANTHER" id="PTHR43196:SF1">
    <property type="entry name" value="SULFATE ADENYLYLTRANSFERASE SUBUNIT 2"/>
    <property type="match status" value="1"/>
</dbReference>
<dbReference type="Pfam" id="PF01507">
    <property type="entry name" value="PAPS_reduct"/>
    <property type="match status" value="1"/>
</dbReference>
<dbReference type="PIRSF" id="PIRSF002936">
    <property type="entry name" value="CysDAde_trans"/>
    <property type="match status" value="1"/>
</dbReference>
<dbReference type="SUPFAM" id="SSF52402">
    <property type="entry name" value="Adenine nucleotide alpha hydrolases-like"/>
    <property type="match status" value="1"/>
</dbReference>